<keyword id="KW-1015">Disulfide bond</keyword>
<keyword id="KW-0325">Glycoprotein</keyword>
<keyword id="KW-0372">Hormone</keyword>
<keyword id="KW-0964">Secreted</keyword>
<keyword id="KW-0732">Signal</keyword>
<proteinExistence type="evidence at transcript level"/>
<gene>
    <name type="primary">cgbb</name>
</gene>
<sequence length="146" mass="16411">MTVEISKVFVLMMLNLFLGASSSIWSVAPAAFQLPPCQLINQTVSLEKEGCPRCHAVETTICSGHCLTKDPIIKIPFSNVYQHVCTYRDLFYKTFEFPDCPPGVDPVVTYPVALSCHCSRCVMDTSDCTFESLQPDFCMNDIPFYY</sequence>
<dbReference type="EMBL" id="AF157631">
    <property type="protein sequence ID" value="AAD51935.1"/>
    <property type="molecule type" value="mRNA"/>
</dbReference>
<dbReference type="SMR" id="Q9PW98"/>
<dbReference type="GlyCosmos" id="Q9PW98">
    <property type="glycosylation" value="1 site, No reported glycans"/>
</dbReference>
<dbReference type="GO" id="GO:0005737">
    <property type="term" value="C:cytoplasm"/>
    <property type="evidence" value="ECO:0007669"/>
    <property type="project" value="TreeGrafter"/>
</dbReference>
<dbReference type="GO" id="GO:0005615">
    <property type="term" value="C:extracellular space"/>
    <property type="evidence" value="ECO:0007669"/>
    <property type="project" value="TreeGrafter"/>
</dbReference>
<dbReference type="GO" id="GO:0005179">
    <property type="term" value="F:hormone activity"/>
    <property type="evidence" value="ECO:0007669"/>
    <property type="project" value="UniProtKB-KW"/>
</dbReference>
<dbReference type="GO" id="GO:0007186">
    <property type="term" value="P:G protein-coupled receptor signaling pathway"/>
    <property type="evidence" value="ECO:0007669"/>
    <property type="project" value="TreeGrafter"/>
</dbReference>
<dbReference type="GO" id="GO:0030728">
    <property type="term" value="P:ovulation"/>
    <property type="evidence" value="ECO:0007669"/>
    <property type="project" value="TreeGrafter"/>
</dbReference>
<dbReference type="CDD" id="cd00069">
    <property type="entry name" value="GHB_like"/>
    <property type="match status" value="1"/>
</dbReference>
<dbReference type="FunFam" id="2.10.90.10:FF:000007">
    <property type="entry name" value="Luteinizing hormone beta subunit"/>
    <property type="match status" value="1"/>
</dbReference>
<dbReference type="Gene3D" id="2.10.90.10">
    <property type="entry name" value="Cystine-knot cytokines"/>
    <property type="match status" value="1"/>
</dbReference>
<dbReference type="InterPro" id="IPR029034">
    <property type="entry name" value="Cystine-knot_cytokine"/>
</dbReference>
<dbReference type="InterPro" id="IPR006208">
    <property type="entry name" value="Glyco_hormone_CN"/>
</dbReference>
<dbReference type="InterPro" id="IPR001545">
    <property type="entry name" value="Gonadotropin_bsu"/>
</dbReference>
<dbReference type="InterPro" id="IPR018245">
    <property type="entry name" value="Gonadotropin_bsu_CS"/>
</dbReference>
<dbReference type="PANTHER" id="PTHR11515">
    <property type="entry name" value="GLYCOPROTEIN HORMONE BETA CHAIN"/>
    <property type="match status" value="1"/>
</dbReference>
<dbReference type="PANTHER" id="PTHR11515:SF11">
    <property type="entry name" value="LUTROPIN SUBUNIT BETA"/>
    <property type="match status" value="1"/>
</dbReference>
<dbReference type="Pfam" id="PF00007">
    <property type="entry name" value="Cys_knot"/>
    <property type="match status" value="1"/>
</dbReference>
<dbReference type="SMART" id="SM00068">
    <property type="entry name" value="GHB"/>
    <property type="match status" value="1"/>
</dbReference>
<dbReference type="SUPFAM" id="SSF57501">
    <property type="entry name" value="Cystine-knot cytokines"/>
    <property type="match status" value="1"/>
</dbReference>
<dbReference type="PROSITE" id="PS00261">
    <property type="entry name" value="GLYCO_HORMONE_BETA_1"/>
    <property type="match status" value="1"/>
</dbReference>
<dbReference type="PROSITE" id="PS00689">
    <property type="entry name" value="GLYCO_HORMONE_BETA_2"/>
    <property type="match status" value="1"/>
</dbReference>
<feature type="signal peptide" evidence="2">
    <location>
        <begin position="1"/>
        <end position="22"/>
    </location>
</feature>
<feature type="chain" id="PRO_0000011705" description="Gonadotropin subunit beta-2">
    <location>
        <begin position="23"/>
        <end position="146"/>
    </location>
</feature>
<feature type="glycosylation site" description="N-linked (GlcNAc...) asparagine" evidence="2">
    <location>
        <position position="41"/>
    </location>
</feature>
<feature type="disulfide bond" evidence="1">
    <location>
        <begin position="37"/>
        <end position="85"/>
    </location>
</feature>
<feature type="disulfide bond" evidence="1">
    <location>
        <begin position="51"/>
        <end position="100"/>
    </location>
</feature>
<feature type="disulfide bond" evidence="1">
    <location>
        <begin position="54"/>
        <end position="138"/>
    </location>
</feature>
<feature type="disulfide bond" evidence="1">
    <location>
        <begin position="62"/>
        <end position="116"/>
    </location>
</feature>
<feature type="disulfide bond" evidence="1">
    <location>
        <begin position="66"/>
        <end position="118"/>
    </location>
</feature>
<feature type="disulfide bond" evidence="1">
    <location>
        <begin position="121"/>
        <end position="128"/>
    </location>
</feature>
<accession>Q9PW98</accession>
<comment type="function">
    <text>Involved in gametogenesis and steroidogenesis.</text>
</comment>
<comment type="subunit">
    <text>Heterodimer of an alpha and a beta chain.</text>
</comment>
<comment type="subcellular location">
    <subcellularLocation>
        <location>Secreted</location>
    </subcellularLocation>
</comment>
<comment type="similarity">
    <text evidence="3">Belongs to the glycoprotein hormones subunit beta family.</text>
</comment>
<name>GTHB2_TRITC</name>
<reference key="1">
    <citation type="journal article" date="1999" name="J. Mol. Endocrinol.">
        <title>Blue gourami (Trichogaster trichopterus) gonadotropic beta subunits (I and II) cDNA sequences and expression during oogenesis.</title>
        <authorList>
            <person name="Jackson K."/>
            <person name="Goldberg D."/>
            <person name="Ofir M."/>
            <person name="Abraham M."/>
            <person name="Degani G."/>
        </authorList>
    </citation>
    <scope>NUCLEOTIDE SEQUENCE [MRNA]</scope>
</reference>
<evidence type="ECO:0000250" key="1"/>
<evidence type="ECO:0000255" key="2"/>
<evidence type="ECO:0000305" key="3"/>
<protein>
    <recommendedName>
        <fullName>Gonadotropin subunit beta-2</fullName>
    </recommendedName>
    <alternativeName>
        <fullName>GTH-II-beta</fullName>
    </alternativeName>
    <alternativeName>
        <fullName>Gonadotropin beta-II chain</fullName>
    </alternativeName>
</protein>
<organism>
    <name type="scientific">Trichopodus trichopterus</name>
    <name type="common">Three spot gourami</name>
    <name type="synonym">Trichogaster trichopterus</name>
    <dbReference type="NCBI Taxonomy" id="96903"/>
    <lineage>
        <taxon>Eukaryota</taxon>
        <taxon>Metazoa</taxon>
        <taxon>Chordata</taxon>
        <taxon>Craniata</taxon>
        <taxon>Vertebrata</taxon>
        <taxon>Euteleostomi</taxon>
        <taxon>Actinopterygii</taxon>
        <taxon>Neopterygii</taxon>
        <taxon>Teleostei</taxon>
        <taxon>Neoteleostei</taxon>
        <taxon>Acanthomorphata</taxon>
        <taxon>Anabantaria</taxon>
        <taxon>Anabantiformes</taxon>
        <taxon>Anabantoidei</taxon>
        <taxon>Osphronemidae</taxon>
        <taxon>Luciocephalinae</taxon>
        <taxon>Trichopodus</taxon>
    </lineage>
</organism>